<gene>
    <name type="ORF">DDB_G0295713</name>
</gene>
<dbReference type="EMBL" id="AAFI02000041">
    <property type="protein sequence ID" value="EEU04104.1"/>
    <property type="molecule type" value="Genomic_DNA"/>
</dbReference>
<dbReference type="RefSeq" id="XP_002649156.1">
    <property type="nucleotide sequence ID" value="XM_002649110.1"/>
</dbReference>
<dbReference type="SMR" id="P0C7G9"/>
<dbReference type="FunCoup" id="P0C7G9">
    <property type="interactions" value="877"/>
</dbReference>
<dbReference type="PaxDb" id="44689-DDB0252884"/>
<dbReference type="EnsemblProtists" id="EEU04104">
    <property type="protein sequence ID" value="EEU04104"/>
    <property type="gene ID" value="DDB_G0295713"/>
</dbReference>
<dbReference type="GeneID" id="8623032"/>
<dbReference type="KEGG" id="ddi:DDB_G0295713"/>
<dbReference type="dictyBase" id="DDB_G0295713"/>
<dbReference type="VEuPathDB" id="AmoebaDB:DDB_G0295713"/>
<dbReference type="eggNOG" id="KOG0941">
    <property type="taxonomic scope" value="Eukaryota"/>
</dbReference>
<dbReference type="HOGENOM" id="CLU_392035_0_0_1"/>
<dbReference type="InParanoid" id="P0C7G9"/>
<dbReference type="OMA" id="NDCKNDI"/>
<dbReference type="PhylomeDB" id="P0C7G9"/>
<dbReference type="Reactome" id="R-DDI-1169408">
    <property type="pathway name" value="ISG15 antiviral mechanism"/>
</dbReference>
<dbReference type="Reactome" id="R-DDI-936440">
    <property type="pathway name" value="Negative regulators of DDX58/IFIH1 signaling"/>
</dbReference>
<dbReference type="Reactome" id="R-DDI-983168">
    <property type="pathway name" value="Antigen processing: Ubiquitination &amp; Proteasome degradation"/>
</dbReference>
<dbReference type="Reactome" id="R-DDI-9909505">
    <property type="pathway name" value="Modulation of host responses by IFN-stimulated genes"/>
</dbReference>
<dbReference type="PRO" id="PR:P0C7G9"/>
<dbReference type="Proteomes" id="UP000002195">
    <property type="component" value="Chromosome 3"/>
</dbReference>
<dbReference type="Gene3D" id="2.130.10.30">
    <property type="entry name" value="Regulator of chromosome condensation 1/beta-lactamase-inhibitor protein II"/>
    <property type="match status" value="2"/>
</dbReference>
<dbReference type="InterPro" id="IPR009091">
    <property type="entry name" value="RCC1/BLIP-II"/>
</dbReference>
<dbReference type="InterPro" id="IPR000408">
    <property type="entry name" value="Reg_chr_condens"/>
</dbReference>
<dbReference type="InterPro" id="IPR051210">
    <property type="entry name" value="Ub_ligase/GEF_domain"/>
</dbReference>
<dbReference type="PANTHER" id="PTHR22870:SF408">
    <property type="entry name" value="OS09G0560450 PROTEIN"/>
    <property type="match status" value="1"/>
</dbReference>
<dbReference type="PANTHER" id="PTHR22870">
    <property type="entry name" value="REGULATOR OF CHROMOSOME CONDENSATION"/>
    <property type="match status" value="1"/>
</dbReference>
<dbReference type="Pfam" id="PF00415">
    <property type="entry name" value="RCC1"/>
    <property type="match status" value="1"/>
</dbReference>
<dbReference type="Pfam" id="PF13540">
    <property type="entry name" value="RCC1_2"/>
    <property type="match status" value="1"/>
</dbReference>
<dbReference type="SUPFAM" id="SSF50985">
    <property type="entry name" value="RCC1/BLIP-II"/>
    <property type="match status" value="1"/>
</dbReference>
<dbReference type="PROSITE" id="PS00626">
    <property type="entry name" value="RCC1_2"/>
    <property type="match status" value="1"/>
</dbReference>
<dbReference type="PROSITE" id="PS50012">
    <property type="entry name" value="RCC1_3"/>
    <property type="match status" value="1"/>
</dbReference>
<evidence type="ECO:0000255" key="1"/>
<evidence type="ECO:0000256" key="2">
    <source>
        <dbReference type="SAM" id="MobiDB-lite"/>
    </source>
</evidence>
<keyword id="KW-0175">Coiled coil</keyword>
<keyword id="KW-1185">Reference proteome</keyword>
<keyword id="KW-0677">Repeat</keyword>
<name>RCCDB_DICDI</name>
<sequence length="704" mass="80218">MYCWGSGRIGHGSPLSDIKTPKPLYFNISNSEQVNIFSEEEETEVKGEKDIEFIDFCAGRAHSLAIDNKNRCWVFGENSSAEFGNNSLVYSKVPILNKQFENEKIVSVSCWNQSYAITDQGKVWEWGKSIDTLIPRLLKFQYPIKAIDCSLNNSIGVSHNGIAFIGFNFNNEPKPVDYFIENNIEIQSVACGVNHYLYLTNRGEVYSNGGGISTGHYDEFYNNNNNNNNNNNNNNNNNNNNNNNNNNEIKEKVVEKVVEEEEGEEQFNIIIPKKLKQLRNIIEISSGYYNSLALDGYQNQVYGWGENLNGQLGIEGIDYSTEPILIELPLVEIKHISSGAYHSAFVTNNGELIVMGGGLVVSDDIRMSVALGNGEGGFQTIQFKVDTTKDETIISENIKFNKPTSQLINFEIKDKNENNETKHTNKNKDNHDDDDESDHSDDDHHDDDDNDKDSQGINDKGILTEEEMLEFQYHFNELSHYDGARNQFSPQFIQSLKKNKIVIDKVSCGKFHTLATPSKIQLIAPIESLQQYCIKYISENIINNMETDTSFPDINTLPINTVLKIDSHLTLNRNHSDRSQRLMSYLKSSFKQNINNNNNNNNSTTVNSPKSTKYEWDQYLENYSKEFEANAIVTLNNIEILTKTKGFEISLETINAIINGFIEFSQYIEQTSTQVANSENENENEIEMKMKMKKNEMKMKMKMK</sequence>
<organism>
    <name type="scientific">Dictyostelium discoideum</name>
    <name type="common">Social amoeba</name>
    <dbReference type="NCBI Taxonomy" id="44689"/>
    <lineage>
        <taxon>Eukaryota</taxon>
        <taxon>Amoebozoa</taxon>
        <taxon>Evosea</taxon>
        <taxon>Eumycetozoa</taxon>
        <taxon>Dictyostelia</taxon>
        <taxon>Dictyosteliales</taxon>
        <taxon>Dictyosteliaceae</taxon>
        <taxon>Dictyostelium</taxon>
    </lineage>
</organism>
<feature type="chain" id="PRO_0000356177" description="RCC1 domain-containing protein DDB_G0295713">
    <location>
        <begin position="1"/>
        <end position="704"/>
    </location>
</feature>
<feature type="repeat" description="RCC1 1">
    <location>
        <begin position="1"/>
        <end position="48"/>
    </location>
</feature>
<feature type="repeat" description="RCC1 2">
    <location>
        <begin position="69"/>
        <end position="120"/>
    </location>
</feature>
<feature type="repeat" description="RCC1 3">
    <location>
        <begin position="298"/>
        <end position="348"/>
    </location>
</feature>
<feature type="region of interest" description="Disordered" evidence="2">
    <location>
        <begin position="221"/>
        <end position="246"/>
    </location>
</feature>
<feature type="region of interest" description="Disordered" evidence="2">
    <location>
        <begin position="412"/>
        <end position="458"/>
    </location>
</feature>
<feature type="coiled-coil region" evidence="1">
    <location>
        <begin position="668"/>
        <end position="698"/>
    </location>
</feature>
<feature type="compositionally biased region" description="Low complexity" evidence="2">
    <location>
        <begin position="222"/>
        <end position="246"/>
    </location>
</feature>
<feature type="compositionally biased region" description="Basic and acidic residues" evidence="2">
    <location>
        <begin position="412"/>
        <end position="431"/>
    </location>
</feature>
<feature type="compositionally biased region" description="Acidic residues" evidence="2">
    <location>
        <begin position="432"/>
        <end position="451"/>
    </location>
</feature>
<reference key="1">
    <citation type="journal article" date="2005" name="Nature">
        <title>The genome of the social amoeba Dictyostelium discoideum.</title>
        <authorList>
            <person name="Eichinger L."/>
            <person name="Pachebat J.A."/>
            <person name="Gloeckner G."/>
            <person name="Rajandream M.A."/>
            <person name="Sucgang R."/>
            <person name="Berriman M."/>
            <person name="Song J."/>
            <person name="Olsen R."/>
            <person name="Szafranski K."/>
            <person name="Xu Q."/>
            <person name="Tunggal B."/>
            <person name="Kummerfeld S."/>
            <person name="Madera M."/>
            <person name="Konfortov B.A."/>
            <person name="Rivero F."/>
            <person name="Bankier A.T."/>
            <person name="Lehmann R."/>
            <person name="Hamlin N."/>
            <person name="Davies R."/>
            <person name="Gaudet P."/>
            <person name="Fey P."/>
            <person name="Pilcher K."/>
            <person name="Chen G."/>
            <person name="Saunders D."/>
            <person name="Sodergren E.J."/>
            <person name="Davis P."/>
            <person name="Kerhornou A."/>
            <person name="Nie X."/>
            <person name="Hall N."/>
            <person name="Anjard C."/>
            <person name="Hemphill L."/>
            <person name="Bason N."/>
            <person name="Farbrother P."/>
            <person name="Desany B."/>
            <person name="Just E."/>
            <person name="Morio T."/>
            <person name="Rost R."/>
            <person name="Churcher C.M."/>
            <person name="Cooper J."/>
            <person name="Haydock S."/>
            <person name="van Driessche N."/>
            <person name="Cronin A."/>
            <person name="Goodhead I."/>
            <person name="Muzny D.M."/>
            <person name="Mourier T."/>
            <person name="Pain A."/>
            <person name="Lu M."/>
            <person name="Harper D."/>
            <person name="Lindsay R."/>
            <person name="Hauser H."/>
            <person name="James K.D."/>
            <person name="Quiles M."/>
            <person name="Madan Babu M."/>
            <person name="Saito T."/>
            <person name="Buchrieser C."/>
            <person name="Wardroper A."/>
            <person name="Felder M."/>
            <person name="Thangavelu M."/>
            <person name="Johnson D."/>
            <person name="Knights A."/>
            <person name="Loulseged H."/>
            <person name="Mungall K.L."/>
            <person name="Oliver K."/>
            <person name="Price C."/>
            <person name="Quail M.A."/>
            <person name="Urushihara H."/>
            <person name="Hernandez J."/>
            <person name="Rabbinowitsch E."/>
            <person name="Steffen D."/>
            <person name="Sanders M."/>
            <person name="Ma J."/>
            <person name="Kohara Y."/>
            <person name="Sharp S."/>
            <person name="Simmonds M.N."/>
            <person name="Spiegler S."/>
            <person name="Tivey A."/>
            <person name="Sugano S."/>
            <person name="White B."/>
            <person name="Walker D."/>
            <person name="Woodward J.R."/>
            <person name="Winckler T."/>
            <person name="Tanaka Y."/>
            <person name="Shaulsky G."/>
            <person name="Schleicher M."/>
            <person name="Weinstock G.M."/>
            <person name="Rosenthal A."/>
            <person name="Cox E.C."/>
            <person name="Chisholm R.L."/>
            <person name="Gibbs R.A."/>
            <person name="Loomis W.F."/>
            <person name="Platzer M."/>
            <person name="Kay R.R."/>
            <person name="Williams J.G."/>
            <person name="Dear P.H."/>
            <person name="Noegel A.A."/>
            <person name="Barrell B.G."/>
            <person name="Kuspa A."/>
        </authorList>
    </citation>
    <scope>NUCLEOTIDE SEQUENCE [LARGE SCALE GENOMIC DNA]</scope>
    <source>
        <strain>AX4</strain>
    </source>
</reference>
<protein>
    <recommendedName>
        <fullName>RCC1 domain-containing protein DDB_G0295713</fullName>
    </recommendedName>
</protein>
<accession>P0C7G9</accession>
<accession>C7G016</accession>
<proteinExistence type="predicted"/>